<dbReference type="EMBL" id="DQ309434">
    <property type="protein sequence ID" value="ABC46698.1"/>
    <property type="molecule type" value="mRNA"/>
</dbReference>
<dbReference type="EMBL" id="AAFI02000199">
    <property type="protein sequence ID" value="EAL60942.1"/>
    <property type="molecule type" value="Genomic_DNA"/>
</dbReference>
<dbReference type="RefSeq" id="XP_629327.1">
    <property type="nucleotide sequence ID" value="XM_629325.1"/>
</dbReference>
<dbReference type="SMR" id="Q54C92"/>
<dbReference type="FunCoup" id="Q54C92">
    <property type="interactions" value="669"/>
</dbReference>
<dbReference type="STRING" id="44689.Q54C92"/>
<dbReference type="PaxDb" id="44689-DDB0233105"/>
<dbReference type="EnsemblProtists" id="EAL60942">
    <property type="protein sequence ID" value="EAL60942"/>
    <property type="gene ID" value="DDB_G0293180"/>
</dbReference>
<dbReference type="GeneID" id="8629051"/>
<dbReference type="KEGG" id="ddi:DDB_G0293180"/>
<dbReference type="dictyBase" id="DDB_G0293180">
    <property type="gene designation" value="csn6"/>
</dbReference>
<dbReference type="VEuPathDB" id="AmoebaDB:DDB_G0293180"/>
<dbReference type="eggNOG" id="KOG3050">
    <property type="taxonomic scope" value="Eukaryota"/>
</dbReference>
<dbReference type="HOGENOM" id="CLU_027018_1_2_1"/>
<dbReference type="InParanoid" id="Q54C92"/>
<dbReference type="OMA" id="LVGWWST"/>
<dbReference type="PhylomeDB" id="Q54C92"/>
<dbReference type="Reactome" id="R-DDI-5696394">
    <property type="pathway name" value="DNA Damage Recognition in GG-NER"/>
</dbReference>
<dbReference type="Reactome" id="R-DDI-6781823">
    <property type="pathway name" value="Formation of TC-NER Pre-Incision Complex"/>
</dbReference>
<dbReference type="Reactome" id="R-DDI-8856825">
    <property type="pathway name" value="Cargo recognition for clathrin-mediated endocytosis"/>
</dbReference>
<dbReference type="Reactome" id="R-DDI-8951664">
    <property type="pathway name" value="Neddylation"/>
</dbReference>
<dbReference type="PRO" id="PR:Q54C92"/>
<dbReference type="Proteomes" id="UP000002195">
    <property type="component" value="Chromosome 6"/>
</dbReference>
<dbReference type="GO" id="GO:0008180">
    <property type="term" value="C:COP9 signalosome"/>
    <property type="evidence" value="ECO:0000353"/>
    <property type="project" value="dictyBase"/>
</dbReference>
<dbReference type="GO" id="GO:0045335">
    <property type="term" value="C:phagocytic vesicle"/>
    <property type="evidence" value="ECO:0007005"/>
    <property type="project" value="dictyBase"/>
</dbReference>
<dbReference type="GO" id="GO:0008237">
    <property type="term" value="F:metallopeptidase activity"/>
    <property type="evidence" value="ECO:0007669"/>
    <property type="project" value="InterPro"/>
</dbReference>
<dbReference type="GO" id="GO:0000338">
    <property type="term" value="P:protein deneddylation"/>
    <property type="evidence" value="ECO:0007669"/>
    <property type="project" value="InterPro"/>
</dbReference>
<dbReference type="CDD" id="cd08063">
    <property type="entry name" value="MPN_CSN6"/>
    <property type="match status" value="1"/>
</dbReference>
<dbReference type="Gene3D" id="3.40.140.10">
    <property type="entry name" value="Cytidine Deaminase, domain 2"/>
    <property type="match status" value="1"/>
</dbReference>
<dbReference type="InterPro" id="IPR024969">
    <property type="entry name" value="EIF3F/CSN6-like_C"/>
</dbReference>
<dbReference type="InterPro" id="IPR000555">
    <property type="entry name" value="JAMM/MPN+_dom"/>
</dbReference>
<dbReference type="InterPro" id="IPR037518">
    <property type="entry name" value="MPN"/>
</dbReference>
<dbReference type="InterPro" id="IPR033859">
    <property type="entry name" value="MPN_CSN6"/>
</dbReference>
<dbReference type="PANTHER" id="PTHR10540:SF8">
    <property type="entry name" value="COP9 SIGNALOSOME COMPLEX SUBUNIT 6"/>
    <property type="match status" value="1"/>
</dbReference>
<dbReference type="PANTHER" id="PTHR10540">
    <property type="entry name" value="EUKARYOTIC TRANSLATION INITIATION FACTOR 3 SUBUNIT F-RELATED"/>
    <property type="match status" value="1"/>
</dbReference>
<dbReference type="Pfam" id="PF01398">
    <property type="entry name" value="JAB"/>
    <property type="match status" value="1"/>
</dbReference>
<dbReference type="Pfam" id="PF13012">
    <property type="entry name" value="MitMem_reg"/>
    <property type="match status" value="1"/>
</dbReference>
<dbReference type="SMART" id="SM00232">
    <property type="entry name" value="JAB_MPN"/>
    <property type="match status" value="1"/>
</dbReference>
<dbReference type="PROSITE" id="PS50249">
    <property type="entry name" value="MPN"/>
    <property type="match status" value="1"/>
</dbReference>
<evidence type="ECO:0000250" key="1"/>
<evidence type="ECO:0000255" key="2">
    <source>
        <dbReference type="PROSITE-ProRule" id="PRU01182"/>
    </source>
</evidence>
<evidence type="ECO:0000269" key="3">
    <source>
    </source>
</evidence>
<evidence type="ECO:0000305" key="4"/>
<organism>
    <name type="scientific">Dictyostelium discoideum</name>
    <name type="common">Social amoeba</name>
    <dbReference type="NCBI Taxonomy" id="44689"/>
    <lineage>
        <taxon>Eukaryota</taxon>
        <taxon>Amoebozoa</taxon>
        <taxon>Evosea</taxon>
        <taxon>Eumycetozoa</taxon>
        <taxon>Dictyostelia</taxon>
        <taxon>Dictyosteliales</taxon>
        <taxon>Dictyosteliaceae</taxon>
        <taxon>Dictyostelium</taxon>
    </lineage>
</organism>
<name>CSN6_DICDI</name>
<reference key="1">
    <citation type="journal article" date="2006" name="Eur. J. Cell Biol.">
        <title>The COP9 signalosome regulates cell proliferation of Dictyostelium discoideum.</title>
        <authorList>
            <person name="Rosel D."/>
            <person name="Kimmel A.R."/>
        </authorList>
    </citation>
    <scope>NUCLEOTIDE SEQUENCE [MRNA]</scope>
    <scope>IDENTIFICATION IN THE CSN COMPLEX</scope>
    <scope>SUBCELLULAR LOCATION</scope>
</reference>
<reference key="2">
    <citation type="journal article" date="2005" name="Nature">
        <title>The genome of the social amoeba Dictyostelium discoideum.</title>
        <authorList>
            <person name="Eichinger L."/>
            <person name="Pachebat J.A."/>
            <person name="Gloeckner G."/>
            <person name="Rajandream M.A."/>
            <person name="Sucgang R."/>
            <person name="Berriman M."/>
            <person name="Song J."/>
            <person name="Olsen R."/>
            <person name="Szafranski K."/>
            <person name="Xu Q."/>
            <person name="Tunggal B."/>
            <person name="Kummerfeld S."/>
            <person name="Madera M."/>
            <person name="Konfortov B.A."/>
            <person name="Rivero F."/>
            <person name="Bankier A.T."/>
            <person name="Lehmann R."/>
            <person name="Hamlin N."/>
            <person name="Davies R."/>
            <person name="Gaudet P."/>
            <person name="Fey P."/>
            <person name="Pilcher K."/>
            <person name="Chen G."/>
            <person name="Saunders D."/>
            <person name="Sodergren E.J."/>
            <person name="Davis P."/>
            <person name="Kerhornou A."/>
            <person name="Nie X."/>
            <person name="Hall N."/>
            <person name="Anjard C."/>
            <person name="Hemphill L."/>
            <person name="Bason N."/>
            <person name="Farbrother P."/>
            <person name="Desany B."/>
            <person name="Just E."/>
            <person name="Morio T."/>
            <person name="Rost R."/>
            <person name="Churcher C.M."/>
            <person name="Cooper J."/>
            <person name="Haydock S."/>
            <person name="van Driessche N."/>
            <person name="Cronin A."/>
            <person name="Goodhead I."/>
            <person name="Muzny D.M."/>
            <person name="Mourier T."/>
            <person name="Pain A."/>
            <person name="Lu M."/>
            <person name="Harper D."/>
            <person name="Lindsay R."/>
            <person name="Hauser H."/>
            <person name="James K.D."/>
            <person name="Quiles M."/>
            <person name="Madan Babu M."/>
            <person name="Saito T."/>
            <person name="Buchrieser C."/>
            <person name="Wardroper A."/>
            <person name="Felder M."/>
            <person name="Thangavelu M."/>
            <person name="Johnson D."/>
            <person name="Knights A."/>
            <person name="Loulseged H."/>
            <person name="Mungall K.L."/>
            <person name="Oliver K."/>
            <person name="Price C."/>
            <person name="Quail M.A."/>
            <person name="Urushihara H."/>
            <person name="Hernandez J."/>
            <person name="Rabbinowitsch E."/>
            <person name="Steffen D."/>
            <person name="Sanders M."/>
            <person name="Ma J."/>
            <person name="Kohara Y."/>
            <person name="Sharp S."/>
            <person name="Simmonds M.N."/>
            <person name="Spiegler S."/>
            <person name="Tivey A."/>
            <person name="Sugano S."/>
            <person name="White B."/>
            <person name="Walker D."/>
            <person name="Woodward J.R."/>
            <person name="Winckler T."/>
            <person name="Tanaka Y."/>
            <person name="Shaulsky G."/>
            <person name="Schleicher M."/>
            <person name="Weinstock G.M."/>
            <person name="Rosenthal A."/>
            <person name="Cox E.C."/>
            <person name="Chisholm R.L."/>
            <person name="Gibbs R.A."/>
            <person name="Loomis W.F."/>
            <person name="Platzer M."/>
            <person name="Kay R.R."/>
            <person name="Williams J.G."/>
            <person name="Dear P.H."/>
            <person name="Noegel A.A."/>
            <person name="Barrell B.G."/>
            <person name="Kuspa A."/>
        </authorList>
    </citation>
    <scope>NUCLEOTIDE SEQUENCE [LARGE SCALE GENOMIC DNA]</scope>
    <source>
        <strain>AX4</strain>
    </source>
</reference>
<reference key="3">
    <citation type="journal article" date="2006" name="Mol. Cell. Proteomics">
        <title>Proteomics fingerprinting of phagosome maturation and evidence for the role of a Galpha during uptake.</title>
        <authorList>
            <person name="Gotthardt D."/>
            <person name="Blancheteau V."/>
            <person name="Bosserhoff A."/>
            <person name="Ruppert T."/>
            <person name="Delorenzi M."/>
            <person name="Soldati T."/>
        </authorList>
    </citation>
    <scope>IDENTIFICATION BY MASS SPECTROMETRY [LARGE SCALE ANALYSIS]</scope>
    <source>
        <strain>AX2</strain>
    </source>
</reference>
<feature type="chain" id="PRO_0000327769" description="COP9 signalosome complex subunit 6">
    <location>
        <begin position="1"/>
        <end position="309"/>
    </location>
</feature>
<feature type="domain" description="MPN" evidence="2">
    <location>
        <begin position="28"/>
        <end position="161"/>
    </location>
</feature>
<comment type="function">
    <text>Component of the COP9 signalosome complex (CSN), a complex involved in various cellular and developmental processes. The CSN complex is an essential regulator of the ubiquitin (Ubl) conjugation pathway by mediating the deneddylation of the cullin subunits of E3 ligase complexes, leading to modify the Ubl ligase activity.</text>
</comment>
<comment type="subunit">
    <text evidence="3">Component of the CSN complex. The holocomplex is comprised of 8 subunits csn1-8. In the complex, it probably interacts directly with csn2, csn5 and csn7.</text>
</comment>
<comment type="subcellular location">
    <subcellularLocation>
        <location evidence="1">Cytoplasm</location>
    </subcellularLocation>
    <subcellularLocation>
        <location evidence="1">Nucleus</location>
    </subcellularLocation>
    <subcellularLocation>
        <location evidence="3">Cytoplasmic vesicle</location>
        <location evidence="3">Phagosome</location>
    </subcellularLocation>
</comment>
<comment type="miscellaneous">
    <text evidence="1">Although strongly related to metalloprotease proteins, it lacks the JAMM motif that probably constitutes the catalytic center. Its function as protease is therefore unsure (By similarity).</text>
</comment>
<comment type="similarity">
    <text evidence="4">Belongs to the peptidase M67A family. CSN6 subfamily.</text>
</comment>
<proteinExistence type="evidence at protein level"/>
<protein>
    <recommendedName>
        <fullName>COP9 signalosome complex subunit 6</fullName>
        <shortName>Signalosome subunit 6</shortName>
    </recommendedName>
</protein>
<gene>
    <name type="primary">csn6</name>
    <name type="ORF">DDB_G0293180</name>
</gene>
<sequence length="309" mass="35107">MTDTTTTTTTDANKLVLEKSANSSGLEVDLHPLVLINISDHFTRTKVQSNYQDNCRVIGVILGVQNGRNVEICNSFEMVYATVDKQLVLDIEYLRKKYEQLFPLYDLLGWYSTGSQVSKDDILLHKQISEHNESPLYLMLDTDSPKSKDLPVIIYESELHIVNDEPTTIFVKTPYKIQTGEAERIGVNHIAKVTPSGSEGSGLTSHLFTMHNAISMLNIRVKALSDYLQAVKEKRLPYEQNILRKASSLCNQLPTIDTHDFKKSYLQEYNDVLLVTYLASITKTSASLNDTIDKYLVSNEKQSKRRFYQ</sequence>
<keyword id="KW-0963">Cytoplasm</keyword>
<keyword id="KW-0968">Cytoplasmic vesicle</keyword>
<keyword id="KW-0539">Nucleus</keyword>
<keyword id="KW-1185">Reference proteome</keyword>
<keyword id="KW-0736">Signalosome</keyword>
<accession>Q54C92</accession>
<accession>Q2PQ73</accession>